<gene>
    <name type="ORF">IIV3-088R</name>
</gene>
<proteinExistence type="inferred from homology"/>
<dbReference type="EMBL" id="DQ643392">
    <property type="protein sequence ID" value="ABF82118.1"/>
    <property type="molecule type" value="Genomic_DNA"/>
</dbReference>
<dbReference type="RefSeq" id="YP_654660.1">
    <property type="nucleotide sequence ID" value="NC_008187.1"/>
</dbReference>
<dbReference type="KEGG" id="vg:4156232"/>
<dbReference type="OrthoDB" id="9258at10239"/>
<dbReference type="Proteomes" id="UP000001358">
    <property type="component" value="Genome"/>
</dbReference>
<dbReference type="GO" id="GO:0005524">
    <property type="term" value="F:ATP binding"/>
    <property type="evidence" value="ECO:0007669"/>
    <property type="project" value="UniProtKB-KW"/>
</dbReference>
<dbReference type="Gene3D" id="3.40.50.300">
    <property type="entry name" value="P-loop containing nucleotide triphosphate hydrolases"/>
    <property type="match status" value="1"/>
</dbReference>
<dbReference type="InterPro" id="IPR027417">
    <property type="entry name" value="P-loop_NTPase"/>
</dbReference>
<dbReference type="SUPFAM" id="SSF52540">
    <property type="entry name" value="P-loop containing nucleoside triphosphate hydrolases"/>
    <property type="match status" value="1"/>
</dbReference>
<reference key="1">
    <citation type="journal article" date="2006" name="J. Virol.">
        <title>Genome of invertebrate iridescent virus type 3 (mosquito iridescent virus).</title>
        <authorList>
            <person name="Delhon G."/>
            <person name="Tulman E.R."/>
            <person name="Afonso C.L."/>
            <person name="Lu Z."/>
            <person name="Becnel J.J."/>
            <person name="Moser B.A."/>
            <person name="Kutish G.F."/>
            <person name="Rock D.L."/>
        </authorList>
    </citation>
    <scope>NUCLEOTIDE SEQUENCE [LARGE SCALE GENOMIC DNA]</scope>
</reference>
<organism>
    <name type="scientific">Invertebrate iridescent virus 3</name>
    <name type="common">IIV-3</name>
    <name type="synonym">Mosquito iridescent virus</name>
    <dbReference type="NCBI Taxonomy" id="345201"/>
    <lineage>
        <taxon>Viruses</taxon>
        <taxon>Varidnaviria</taxon>
        <taxon>Bamfordvirae</taxon>
        <taxon>Nucleocytoviricota</taxon>
        <taxon>Megaviricetes</taxon>
        <taxon>Pimascovirales</taxon>
        <taxon>Iridoviridae</taxon>
        <taxon>Betairidovirinae</taxon>
        <taxon>Chloriridovirus</taxon>
    </lineage>
</organism>
<sequence>MIELQDETTIKIKPLDLDMINPNPANFMDPNQGGSKIFIIGKSGSGKSTLIRSLFYNKSQIIPVAQAMSGTESETGFYRQFIPSAYIFDEYDSQALGNMIMRQKAARQYLANPWTMLIIDDCMDETSVFNKTPQPALFKNGRHWKMLYLVALQYALDVKPGIRSNIDGVFIFRESNVAIRKRLYDNYAGIIPTFQLFEKIMDEITKDYTALYIHNVTTSNDWRDCVFYYKAPFENQHVDQFKFGCCEYRGYGAKILKPHLK</sequence>
<feature type="chain" id="PRO_0000377921" description="Uncharacterized protein 088R">
    <location>
        <begin position="1"/>
        <end position="261"/>
    </location>
</feature>
<feature type="binding site" evidence="1">
    <location>
        <begin position="41"/>
        <end position="48"/>
    </location>
    <ligand>
        <name>ATP</name>
        <dbReference type="ChEBI" id="CHEBI:30616"/>
    </ligand>
</feature>
<accession>Q196X2</accession>
<comment type="similarity">
    <text evidence="2">Belongs to the IIV-6 075L family.</text>
</comment>
<organismHost>
    <name type="scientific">Aedes vexans</name>
    <name type="common">Inland floodwater mosquito</name>
    <name type="synonym">Culex vexans</name>
    <dbReference type="NCBI Taxonomy" id="7163"/>
</organismHost>
<organismHost>
    <name type="scientific">Culex territans</name>
    <dbReference type="NCBI Taxonomy" id="42431"/>
</organismHost>
<organismHost>
    <name type="scientific">Culiseta annulata</name>
    <dbReference type="NCBI Taxonomy" id="332058"/>
</organismHost>
<organismHost>
    <name type="scientific">Ochlerotatus sollicitans</name>
    <name type="common">eastern saltmarsh mosquito</name>
    <dbReference type="NCBI Taxonomy" id="310513"/>
</organismHost>
<organismHost>
    <name type="scientific">Ochlerotatus taeniorhynchus</name>
    <name type="common">Black salt marsh mosquito</name>
    <name type="synonym">Aedes taeniorhynchus</name>
    <dbReference type="NCBI Taxonomy" id="329105"/>
</organismHost>
<organismHost>
    <name type="scientific">Psorophora ferox</name>
    <dbReference type="NCBI Taxonomy" id="7183"/>
</organismHost>
<evidence type="ECO:0000255" key="1"/>
<evidence type="ECO:0000305" key="2"/>
<protein>
    <recommendedName>
        <fullName>Uncharacterized protein 088R</fullName>
    </recommendedName>
</protein>
<keyword id="KW-0067">ATP-binding</keyword>
<keyword id="KW-0547">Nucleotide-binding</keyword>
<keyword id="KW-1185">Reference proteome</keyword>
<name>VF075_IIV3</name>